<feature type="chain" id="PRO_0000181479" description="Large ribosomal subunit protein bL25">
    <location>
        <begin position="1"/>
        <end position="94"/>
    </location>
</feature>
<sequence>MFTINAEVRKEQGKGASRRLRAANKFPAIIYGGKEAPLAIELDHDKVMNIQAKAEFYSEVLTIVVDGKEIKVKAQDVQRHPYKPKLQHIDFVRA</sequence>
<reference key="1">
    <citation type="journal article" date="2001" name="Nature">
        <title>Genome sequence of enterohaemorrhagic Escherichia coli O157:H7.</title>
        <authorList>
            <person name="Perna N.T."/>
            <person name="Plunkett G. III"/>
            <person name="Burland V."/>
            <person name="Mau B."/>
            <person name="Glasner J.D."/>
            <person name="Rose D.J."/>
            <person name="Mayhew G.F."/>
            <person name="Evans P.S."/>
            <person name="Gregor J."/>
            <person name="Kirkpatrick H.A."/>
            <person name="Posfai G."/>
            <person name="Hackett J."/>
            <person name="Klink S."/>
            <person name="Boutin A."/>
            <person name="Shao Y."/>
            <person name="Miller L."/>
            <person name="Grotbeck E.J."/>
            <person name="Davis N.W."/>
            <person name="Lim A."/>
            <person name="Dimalanta E.T."/>
            <person name="Potamousis K."/>
            <person name="Apodaca J."/>
            <person name="Anantharaman T.S."/>
            <person name="Lin J."/>
            <person name="Yen G."/>
            <person name="Schwartz D.C."/>
            <person name="Welch R.A."/>
            <person name="Blattner F.R."/>
        </authorList>
    </citation>
    <scope>NUCLEOTIDE SEQUENCE [LARGE SCALE GENOMIC DNA]</scope>
    <source>
        <strain>O157:H7 / EDL933 / ATCC 700927 / EHEC</strain>
    </source>
</reference>
<reference key="2">
    <citation type="journal article" date="2001" name="DNA Res.">
        <title>Complete genome sequence of enterohemorrhagic Escherichia coli O157:H7 and genomic comparison with a laboratory strain K-12.</title>
        <authorList>
            <person name="Hayashi T."/>
            <person name="Makino K."/>
            <person name="Ohnishi M."/>
            <person name="Kurokawa K."/>
            <person name="Ishii K."/>
            <person name="Yokoyama K."/>
            <person name="Han C.-G."/>
            <person name="Ohtsubo E."/>
            <person name="Nakayama K."/>
            <person name="Murata T."/>
            <person name="Tanaka M."/>
            <person name="Tobe T."/>
            <person name="Iida T."/>
            <person name="Takami H."/>
            <person name="Honda T."/>
            <person name="Sasakawa C."/>
            <person name="Ogasawara N."/>
            <person name="Yasunaga T."/>
            <person name="Kuhara S."/>
            <person name="Shiba T."/>
            <person name="Hattori M."/>
            <person name="Shinagawa H."/>
        </authorList>
    </citation>
    <scope>NUCLEOTIDE SEQUENCE [LARGE SCALE GENOMIC DNA]</scope>
    <source>
        <strain>O157:H7 / Sakai / RIMD 0509952 / EHEC</strain>
    </source>
</reference>
<gene>
    <name evidence="1" type="primary">rplY</name>
    <name type="ordered locus">Z3444</name>
    <name type="ordered locus">ECs3077</name>
</gene>
<comment type="function">
    <text evidence="1">This is one of the proteins that binds to the 5S RNA in the ribosome where it forms part of the central protuberance.</text>
</comment>
<comment type="subunit">
    <text evidence="1">Part of the 50S ribosomal subunit; part of the 5S rRNA/L5/L18/L25 subcomplex. Contacts the 5S rRNA. Binds to the 5S rRNA independently of L5 and L18.</text>
</comment>
<comment type="similarity">
    <text evidence="1">Belongs to the bacterial ribosomal protein bL25 family.</text>
</comment>
<proteinExistence type="inferred from homology"/>
<keyword id="KW-1185">Reference proteome</keyword>
<keyword id="KW-0687">Ribonucleoprotein</keyword>
<keyword id="KW-0689">Ribosomal protein</keyword>
<keyword id="KW-0694">RNA-binding</keyword>
<keyword id="KW-0699">rRNA-binding</keyword>
<name>RL25_ECO57</name>
<protein>
    <recommendedName>
        <fullName evidence="1">Large ribosomal subunit protein bL25</fullName>
    </recommendedName>
    <alternativeName>
        <fullName evidence="2">50S ribosomal protein L25</fullName>
    </alternativeName>
</protein>
<accession>Q8XE69</accession>
<accession>Q7AC65</accession>
<organism>
    <name type="scientific">Escherichia coli O157:H7</name>
    <dbReference type="NCBI Taxonomy" id="83334"/>
    <lineage>
        <taxon>Bacteria</taxon>
        <taxon>Pseudomonadati</taxon>
        <taxon>Pseudomonadota</taxon>
        <taxon>Gammaproteobacteria</taxon>
        <taxon>Enterobacterales</taxon>
        <taxon>Enterobacteriaceae</taxon>
        <taxon>Escherichia</taxon>
    </lineage>
</organism>
<dbReference type="EMBL" id="AE005174">
    <property type="protein sequence ID" value="AAG57323.1"/>
    <property type="molecule type" value="Genomic_DNA"/>
</dbReference>
<dbReference type="EMBL" id="BA000007">
    <property type="protein sequence ID" value="BAB36500.1"/>
    <property type="molecule type" value="Genomic_DNA"/>
</dbReference>
<dbReference type="PIR" id="E91013">
    <property type="entry name" value="E91013"/>
</dbReference>
<dbReference type="PIR" id="G85857">
    <property type="entry name" value="G85857"/>
</dbReference>
<dbReference type="RefSeq" id="NP_311104.1">
    <property type="nucleotide sequence ID" value="NC_002695.1"/>
</dbReference>
<dbReference type="RefSeq" id="WP_000494181.1">
    <property type="nucleotide sequence ID" value="NZ_VOAI01000001.1"/>
</dbReference>
<dbReference type="SMR" id="Q8XE69"/>
<dbReference type="STRING" id="155864.Z3444"/>
<dbReference type="GeneID" id="916782"/>
<dbReference type="KEGG" id="ece:Z3444"/>
<dbReference type="KEGG" id="ecs:ECs_3077"/>
<dbReference type="PATRIC" id="fig|386585.9.peg.3209"/>
<dbReference type="eggNOG" id="COG1825">
    <property type="taxonomic scope" value="Bacteria"/>
</dbReference>
<dbReference type="HOGENOM" id="CLU_137946_0_0_6"/>
<dbReference type="OMA" id="DHDKVWN"/>
<dbReference type="Proteomes" id="UP000000558">
    <property type="component" value="Chromosome"/>
</dbReference>
<dbReference type="Proteomes" id="UP000002519">
    <property type="component" value="Chromosome"/>
</dbReference>
<dbReference type="GO" id="GO:0022625">
    <property type="term" value="C:cytosolic large ribosomal subunit"/>
    <property type="evidence" value="ECO:0007669"/>
    <property type="project" value="TreeGrafter"/>
</dbReference>
<dbReference type="GO" id="GO:0008097">
    <property type="term" value="F:5S rRNA binding"/>
    <property type="evidence" value="ECO:0007669"/>
    <property type="project" value="InterPro"/>
</dbReference>
<dbReference type="GO" id="GO:0003735">
    <property type="term" value="F:structural constituent of ribosome"/>
    <property type="evidence" value="ECO:0007669"/>
    <property type="project" value="InterPro"/>
</dbReference>
<dbReference type="GO" id="GO:0006412">
    <property type="term" value="P:translation"/>
    <property type="evidence" value="ECO:0007669"/>
    <property type="project" value="UniProtKB-UniRule"/>
</dbReference>
<dbReference type="CDD" id="cd00495">
    <property type="entry name" value="Ribosomal_L25_TL5_CTC"/>
    <property type="match status" value="1"/>
</dbReference>
<dbReference type="FunFam" id="2.40.240.10:FF:000002">
    <property type="entry name" value="50S ribosomal protein L25"/>
    <property type="match status" value="1"/>
</dbReference>
<dbReference type="Gene3D" id="2.40.240.10">
    <property type="entry name" value="Ribosomal Protein L25, Chain P"/>
    <property type="match status" value="1"/>
</dbReference>
<dbReference type="HAMAP" id="MF_01336">
    <property type="entry name" value="Ribosomal_bL25"/>
    <property type="match status" value="1"/>
</dbReference>
<dbReference type="InterPro" id="IPR020056">
    <property type="entry name" value="Rbsml_bL25/Gln-tRNA_synth_N"/>
</dbReference>
<dbReference type="InterPro" id="IPR011035">
    <property type="entry name" value="Ribosomal_bL25/Gln-tRNA_synth"/>
</dbReference>
<dbReference type="InterPro" id="IPR020055">
    <property type="entry name" value="Ribosomal_bL25_short"/>
</dbReference>
<dbReference type="InterPro" id="IPR029751">
    <property type="entry name" value="Ribosomal_L25_dom"/>
</dbReference>
<dbReference type="InterPro" id="IPR020930">
    <property type="entry name" value="Ribosomal_uL5_bac-type"/>
</dbReference>
<dbReference type="NCBIfam" id="NF004612">
    <property type="entry name" value="PRK05943.1"/>
    <property type="match status" value="1"/>
</dbReference>
<dbReference type="PANTHER" id="PTHR33284">
    <property type="entry name" value="RIBOSOMAL PROTEIN L25/GLN-TRNA SYNTHETASE, ANTI-CODON-BINDING DOMAIN-CONTAINING PROTEIN"/>
    <property type="match status" value="1"/>
</dbReference>
<dbReference type="PANTHER" id="PTHR33284:SF1">
    <property type="entry name" value="RIBOSOMAL PROTEIN L25_GLN-TRNA SYNTHETASE, ANTI-CODON-BINDING DOMAIN-CONTAINING PROTEIN"/>
    <property type="match status" value="1"/>
</dbReference>
<dbReference type="Pfam" id="PF01386">
    <property type="entry name" value="Ribosomal_L25p"/>
    <property type="match status" value="1"/>
</dbReference>
<dbReference type="SUPFAM" id="SSF50715">
    <property type="entry name" value="Ribosomal protein L25-like"/>
    <property type="match status" value="1"/>
</dbReference>
<evidence type="ECO:0000255" key="1">
    <source>
        <dbReference type="HAMAP-Rule" id="MF_01336"/>
    </source>
</evidence>
<evidence type="ECO:0000305" key="2"/>